<dbReference type="EC" id="1.11.1.21" evidence="1"/>
<dbReference type="EMBL" id="BX950851">
    <property type="protein sequence ID" value="CAG74812.1"/>
    <property type="molecule type" value="Genomic_DNA"/>
</dbReference>
<dbReference type="RefSeq" id="WP_011093477.1">
    <property type="nucleotide sequence ID" value="NC_004547.2"/>
</dbReference>
<dbReference type="SMR" id="Q6D5X9"/>
<dbReference type="STRING" id="218491.ECA1909"/>
<dbReference type="PeroxiBase" id="2478">
    <property type="entry name" value="EcarCP01"/>
</dbReference>
<dbReference type="KEGG" id="eca:ECA1909"/>
<dbReference type="PATRIC" id="fig|218491.5.peg.1939"/>
<dbReference type="eggNOG" id="COG0376">
    <property type="taxonomic scope" value="Bacteria"/>
</dbReference>
<dbReference type="HOGENOM" id="CLU_025424_2_0_6"/>
<dbReference type="OrthoDB" id="9759743at2"/>
<dbReference type="Proteomes" id="UP000007966">
    <property type="component" value="Chromosome"/>
</dbReference>
<dbReference type="GO" id="GO:0005829">
    <property type="term" value="C:cytosol"/>
    <property type="evidence" value="ECO:0007669"/>
    <property type="project" value="TreeGrafter"/>
</dbReference>
<dbReference type="GO" id="GO:0004096">
    <property type="term" value="F:catalase activity"/>
    <property type="evidence" value="ECO:0007669"/>
    <property type="project" value="UniProtKB-UniRule"/>
</dbReference>
<dbReference type="GO" id="GO:0020037">
    <property type="term" value="F:heme binding"/>
    <property type="evidence" value="ECO:0007669"/>
    <property type="project" value="InterPro"/>
</dbReference>
<dbReference type="GO" id="GO:0046872">
    <property type="term" value="F:metal ion binding"/>
    <property type="evidence" value="ECO:0007669"/>
    <property type="project" value="UniProtKB-KW"/>
</dbReference>
<dbReference type="GO" id="GO:0070301">
    <property type="term" value="P:cellular response to hydrogen peroxide"/>
    <property type="evidence" value="ECO:0007669"/>
    <property type="project" value="TreeGrafter"/>
</dbReference>
<dbReference type="GO" id="GO:0042744">
    <property type="term" value="P:hydrogen peroxide catabolic process"/>
    <property type="evidence" value="ECO:0007669"/>
    <property type="project" value="UniProtKB-KW"/>
</dbReference>
<dbReference type="CDD" id="cd00649">
    <property type="entry name" value="catalase_peroxidase_1"/>
    <property type="match status" value="1"/>
</dbReference>
<dbReference type="CDD" id="cd08200">
    <property type="entry name" value="catalase_peroxidase_2"/>
    <property type="match status" value="1"/>
</dbReference>
<dbReference type="FunFam" id="1.10.420.10:FF:000004">
    <property type="entry name" value="Catalase-peroxidase"/>
    <property type="match status" value="1"/>
</dbReference>
<dbReference type="FunFam" id="1.10.520.10:FF:000002">
    <property type="entry name" value="Catalase-peroxidase"/>
    <property type="match status" value="1"/>
</dbReference>
<dbReference type="Gene3D" id="1.10.520.10">
    <property type="match status" value="2"/>
</dbReference>
<dbReference type="Gene3D" id="1.10.420.10">
    <property type="entry name" value="Peroxidase, domain 2"/>
    <property type="match status" value="2"/>
</dbReference>
<dbReference type="HAMAP" id="MF_01961">
    <property type="entry name" value="Catal_peroxid"/>
    <property type="match status" value="1"/>
</dbReference>
<dbReference type="InterPro" id="IPR000763">
    <property type="entry name" value="Catalase_peroxidase"/>
</dbReference>
<dbReference type="InterPro" id="IPR002016">
    <property type="entry name" value="Haem_peroxidase"/>
</dbReference>
<dbReference type="InterPro" id="IPR010255">
    <property type="entry name" value="Haem_peroxidase_sf"/>
</dbReference>
<dbReference type="InterPro" id="IPR019794">
    <property type="entry name" value="Peroxidases_AS"/>
</dbReference>
<dbReference type="NCBIfam" id="TIGR00198">
    <property type="entry name" value="cat_per_HPI"/>
    <property type="match status" value="1"/>
</dbReference>
<dbReference type="NCBIfam" id="NF011635">
    <property type="entry name" value="PRK15061.1"/>
    <property type="match status" value="1"/>
</dbReference>
<dbReference type="PANTHER" id="PTHR30555:SF6">
    <property type="entry name" value="CATALASE-PEROXIDASE"/>
    <property type="match status" value="1"/>
</dbReference>
<dbReference type="PANTHER" id="PTHR30555">
    <property type="entry name" value="HYDROPEROXIDASE I, BIFUNCTIONAL CATALASE-PEROXIDASE"/>
    <property type="match status" value="1"/>
</dbReference>
<dbReference type="Pfam" id="PF00141">
    <property type="entry name" value="peroxidase"/>
    <property type="match status" value="2"/>
</dbReference>
<dbReference type="PRINTS" id="PR00460">
    <property type="entry name" value="BPEROXIDASE"/>
</dbReference>
<dbReference type="PRINTS" id="PR00458">
    <property type="entry name" value="PEROXIDASE"/>
</dbReference>
<dbReference type="SUPFAM" id="SSF48113">
    <property type="entry name" value="Heme-dependent peroxidases"/>
    <property type="match status" value="2"/>
</dbReference>
<dbReference type="PROSITE" id="PS00436">
    <property type="entry name" value="PEROXIDASE_2"/>
    <property type="match status" value="1"/>
</dbReference>
<dbReference type="PROSITE" id="PS50873">
    <property type="entry name" value="PEROXIDASE_4"/>
    <property type="match status" value="1"/>
</dbReference>
<feature type="chain" id="PRO_0000354773" description="Catalase-peroxidase">
    <location>
        <begin position="1"/>
        <end position="724"/>
    </location>
</feature>
<feature type="region of interest" description="Disordered" evidence="2">
    <location>
        <begin position="1"/>
        <end position="26"/>
    </location>
</feature>
<feature type="active site" description="Proton acceptor" evidence="1">
    <location>
        <position position="99"/>
    </location>
</feature>
<feature type="binding site" description="axial binding residue" evidence="1">
    <location>
        <position position="266"/>
    </location>
    <ligand>
        <name>heme b</name>
        <dbReference type="ChEBI" id="CHEBI:60344"/>
    </ligand>
    <ligandPart>
        <name>Fe</name>
        <dbReference type="ChEBI" id="CHEBI:18248"/>
    </ligandPart>
</feature>
<feature type="site" description="Transition state stabilizer" evidence="1">
    <location>
        <position position="95"/>
    </location>
</feature>
<feature type="cross-link" description="Tryptophyl-tyrosyl-methioninium (Trp-Tyr) (with M-251)" evidence="1">
    <location>
        <begin position="98"/>
        <end position="225"/>
    </location>
</feature>
<feature type="cross-link" description="Tryptophyl-tyrosyl-methioninium (Tyr-Met) (with W-98)" evidence="1">
    <location>
        <begin position="225"/>
        <end position="251"/>
    </location>
</feature>
<comment type="function">
    <text evidence="1">Bifunctional enzyme with both catalase and broad-spectrum peroxidase activity.</text>
</comment>
<comment type="catalytic activity">
    <reaction evidence="1">
        <text>H2O2 + AH2 = A + 2 H2O</text>
        <dbReference type="Rhea" id="RHEA:30275"/>
        <dbReference type="ChEBI" id="CHEBI:13193"/>
        <dbReference type="ChEBI" id="CHEBI:15377"/>
        <dbReference type="ChEBI" id="CHEBI:16240"/>
        <dbReference type="ChEBI" id="CHEBI:17499"/>
        <dbReference type="EC" id="1.11.1.21"/>
    </reaction>
</comment>
<comment type="catalytic activity">
    <reaction evidence="1">
        <text>2 H2O2 = O2 + 2 H2O</text>
        <dbReference type="Rhea" id="RHEA:20309"/>
        <dbReference type="ChEBI" id="CHEBI:15377"/>
        <dbReference type="ChEBI" id="CHEBI:15379"/>
        <dbReference type="ChEBI" id="CHEBI:16240"/>
        <dbReference type="EC" id="1.11.1.21"/>
    </reaction>
</comment>
<comment type="cofactor">
    <cofactor evidence="1">
        <name>heme b</name>
        <dbReference type="ChEBI" id="CHEBI:60344"/>
    </cofactor>
    <text evidence="1">Binds 1 heme b (iron(II)-protoporphyrin IX) group per dimer.</text>
</comment>
<comment type="subunit">
    <text evidence="1">Homodimer or homotetramer.</text>
</comment>
<comment type="PTM">
    <text evidence="1">Formation of the three residue Trp-Tyr-Met cross-link is important for the catalase, but not the peroxidase activity of the enzyme.</text>
</comment>
<comment type="similarity">
    <text evidence="1">Belongs to the peroxidase family. Peroxidase/catalase subfamily.</text>
</comment>
<keyword id="KW-0349">Heme</keyword>
<keyword id="KW-0376">Hydrogen peroxide</keyword>
<keyword id="KW-0408">Iron</keyword>
<keyword id="KW-0479">Metal-binding</keyword>
<keyword id="KW-0560">Oxidoreductase</keyword>
<keyword id="KW-0575">Peroxidase</keyword>
<keyword id="KW-1185">Reference proteome</keyword>
<reference key="1">
    <citation type="journal article" date="2004" name="Proc. Natl. Acad. Sci. U.S.A.">
        <title>Genome sequence of the enterobacterial phytopathogen Erwinia carotovora subsp. atroseptica and characterization of virulence factors.</title>
        <authorList>
            <person name="Bell K.S."/>
            <person name="Sebaihia M."/>
            <person name="Pritchard L."/>
            <person name="Holden M.T.G."/>
            <person name="Hyman L.J."/>
            <person name="Holeva M.C."/>
            <person name="Thomson N.R."/>
            <person name="Bentley S.D."/>
            <person name="Churcher L.J.C."/>
            <person name="Mungall K."/>
            <person name="Atkin R."/>
            <person name="Bason N."/>
            <person name="Brooks K."/>
            <person name="Chillingworth T."/>
            <person name="Clark K."/>
            <person name="Doggett J."/>
            <person name="Fraser A."/>
            <person name="Hance Z."/>
            <person name="Hauser H."/>
            <person name="Jagels K."/>
            <person name="Moule S."/>
            <person name="Norbertczak H."/>
            <person name="Ormond D."/>
            <person name="Price C."/>
            <person name="Quail M.A."/>
            <person name="Sanders M."/>
            <person name="Walker D."/>
            <person name="Whitehead S."/>
            <person name="Salmond G.P.C."/>
            <person name="Birch P.R.J."/>
            <person name="Parkhill J."/>
            <person name="Toth I.K."/>
        </authorList>
    </citation>
    <scope>NUCLEOTIDE SEQUENCE [LARGE SCALE GENOMIC DNA]</scope>
    <source>
        <strain>SCRI 1043 / ATCC BAA-672</strain>
    </source>
</reference>
<organism>
    <name type="scientific">Pectobacterium atrosepticum (strain SCRI 1043 / ATCC BAA-672)</name>
    <name type="common">Erwinia carotovora subsp. atroseptica</name>
    <dbReference type="NCBI Taxonomy" id="218491"/>
    <lineage>
        <taxon>Bacteria</taxon>
        <taxon>Pseudomonadati</taxon>
        <taxon>Pseudomonadota</taxon>
        <taxon>Gammaproteobacteria</taxon>
        <taxon>Enterobacterales</taxon>
        <taxon>Pectobacteriaceae</taxon>
        <taxon>Pectobacterium</taxon>
    </lineage>
</organism>
<evidence type="ECO:0000255" key="1">
    <source>
        <dbReference type="HAMAP-Rule" id="MF_01961"/>
    </source>
</evidence>
<evidence type="ECO:0000256" key="2">
    <source>
        <dbReference type="SAM" id="MobiDB-lite"/>
    </source>
</evidence>
<name>KATG_PECAS</name>
<proteinExistence type="inferred from homology"/>
<accession>Q6D5X9</accession>
<protein>
    <recommendedName>
        <fullName evidence="1">Catalase-peroxidase</fullName>
        <shortName evidence="1">CP</shortName>
        <ecNumber evidence="1">1.11.1.21</ecNumber>
    </recommendedName>
    <alternativeName>
        <fullName evidence="1">Peroxidase/catalase</fullName>
    </alternativeName>
</protein>
<sequence length="724" mass="80456">MDENKTKPTGKCPVMHGGNTSTGSSNTDWWPNALNLDILHQHDTKTNPLGSDFSYREALKTLDVDALKKDLHALMTDSQEWWPADWGHYGGLMIRMAWHSAGSYRTTDGRGGGGTGNQRFAPLNSWPDNVSLDKARRLLWPIKRKYGNKLSWADLIILAGTIAYESMGLKTFGFAFGREDIWQPEKDTYWGAEKEWLANSTERYGSDDRTSLENPLAAVQMGLIYVNPEGVDGKSDPLRTAQDMRVTFSRMAMNDEETVALTAGGHTVGKTHGNGDASLLGAAPESADVEEQGLGWHNPTGSGKGRYTVTSGLEGAWTTHPTQWDNGFFQMLLNHEWELRKSPAGASQWEPVSIKEEDKPVDVEDPSIRYNPMMTDADMALKVDPEYRKISERFSRDQAYFSEVFARAWFKLTHRDMGPKARYVGPDVPQEDLLWQDPVPAGRTDYDVDLVKARIAESSLSISELVATAWDSARTFRGSDMRGGANGARIRLAPQKDWVGNEPARLARVLVVLESIAAATGASVADTIVLAGNVGIEKAAKAAGVQVTVPFAPGRGDTTDALTDVESFDVLEPIHDGYRNWLKKDYAVSVEELMLDRTQLMGLTANEMTVLVGGLRVLGTNYGGTKHGVFTDREGALTNDFFVNLTDMKYTWKPYRKDLYEIRDRKTGEVKWTATRLDLVFGSNSILRAYAEVYAQDDSKEKFVNDFVAAWVKVMNADRFDLAE</sequence>
<gene>
    <name evidence="1" type="primary">katG</name>
    <name type="ordered locus">ECA1909</name>
</gene>